<sequence length="346" mass="37075">MSTVAAYAAMSATEPLTKTTITRRDPGPHDVAIDIKFAGICHSDIHTVKAEWGQPNYPVVPGHEIAGVVTAVGSEVTKYRQGDRVGVGCFVDSCRECNSCTRGIEQYCKPGANFTYNSIGKDGQPTQGGYSEAIVVDENYVLRIPDVLPLDVAAPLLCAGITLYSPLRHWNAGANTRVAIIGLGGLGHMGVKLGAAMGADVTVLSQSLKKMEDGLRLGAKSYYATADPDTFRKLRGGFDLILNTVSANLDLGQYLNLLDVDGTLVELGIPEHPMAVPAFALALMRRSLAGSNIGGIAETQEMLNFCAEHGVTPEIELIEPDYINDAYERVLASDVRYRFVIDISAL</sequence>
<protein>
    <recommendedName>
        <fullName>NADP-dependent alcohol dehydrogenase C</fullName>
        <ecNumber>1.1.1.2</ecNumber>
    </recommendedName>
</protein>
<accession>P0A4X1</accession>
<accession>A0A1R3Y3Q1</accession>
<accession>P31975</accession>
<accession>X2BMX0</accession>
<keyword id="KW-0479">Metal-binding</keyword>
<keyword id="KW-0521">NADP</keyword>
<keyword id="KW-0560">Oxidoreductase</keyword>
<keyword id="KW-1185">Reference proteome</keyword>
<keyword id="KW-0862">Zinc</keyword>
<organism>
    <name type="scientific">Mycobacterium bovis (strain ATCC BAA-935 / AF2122/97)</name>
    <dbReference type="NCBI Taxonomy" id="233413"/>
    <lineage>
        <taxon>Bacteria</taxon>
        <taxon>Bacillati</taxon>
        <taxon>Actinomycetota</taxon>
        <taxon>Actinomycetes</taxon>
        <taxon>Mycobacteriales</taxon>
        <taxon>Mycobacteriaceae</taxon>
        <taxon>Mycobacterium</taxon>
        <taxon>Mycobacterium tuberculosis complex</taxon>
    </lineage>
</organism>
<dbReference type="EC" id="1.1.1.2"/>
<dbReference type="EMBL" id="X63450">
    <property type="protein sequence ID" value="CAA45049.1"/>
    <property type="molecule type" value="Genomic_DNA"/>
</dbReference>
<dbReference type="EMBL" id="LT708304">
    <property type="protein sequence ID" value="SIU01696.1"/>
    <property type="molecule type" value="Genomic_DNA"/>
</dbReference>
<dbReference type="PIR" id="JC1376">
    <property type="entry name" value="JC1376"/>
</dbReference>
<dbReference type="RefSeq" id="NP_856716.1">
    <property type="nucleotide sequence ID" value="NC_002945.3"/>
</dbReference>
<dbReference type="RefSeq" id="WP_003415965.1">
    <property type="nucleotide sequence ID" value="NC_002945.4"/>
</dbReference>
<dbReference type="SMR" id="P0A4X1"/>
<dbReference type="KEGG" id="mbo:BQ2027_MB3071"/>
<dbReference type="PATRIC" id="fig|233413.5.peg.3374"/>
<dbReference type="SABIO-RK" id="P0A4X1"/>
<dbReference type="Proteomes" id="UP000001419">
    <property type="component" value="Chromosome"/>
</dbReference>
<dbReference type="GO" id="GO:0008106">
    <property type="term" value="F:alcohol dehydrogenase (NADP+) activity"/>
    <property type="evidence" value="ECO:0007669"/>
    <property type="project" value="UniProtKB-EC"/>
</dbReference>
<dbReference type="GO" id="GO:0008270">
    <property type="term" value="F:zinc ion binding"/>
    <property type="evidence" value="ECO:0007669"/>
    <property type="project" value="InterPro"/>
</dbReference>
<dbReference type="CDD" id="cd05283">
    <property type="entry name" value="CAD1"/>
    <property type="match status" value="1"/>
</dbReference>
<dbReference type="FunFam" id="3.40.50.720:FF:000022">
    <property type="entry name" value="Cinnamyl alcohol dehydrogenase"/>
    <property type="match status" value="1"/>
</dbReference>
<dbReference type="Gene3D" id="3.90.180.10">
    <property type="entry name" value="Medium-chain alcohol dehydrogenases, catalytic domain"/>
    <property type="match status" value="1"/>
</dbReference>
<dbReference type="Gene3D" id="3.40.50.720">
    <property type="entry name" value="NAD(P)-binding Rossmann-like Domain"/>
    <property type="match status" value="1"/>
</dbReference>
<dbReference type="InterPro" id="IPR013149">
    <property type="entry name" value="ADH-like_C"/>
</dbReference>
<dbReference type="InterPro" id="IPR013154">
    <property type="entry name" value="ADH-like_N"/>
</dbReference>
<dbReference type="InterPro" id="IPR002328">
    <property type="entry name" value="ADH_Zn_CS"/>
</dbReference>
<dbReference type="InterPro" id="IPR047109">
    <property type="entry name" value="CAD-like"/>
</dbReference>
<dbReference type="InterPro" id="IPR011032">
    <property type="entry name" value="GroES-like_sf"/>
</dbReference>
<dbReference type="InterPro" id="IPR036291">
    <property type="entry name" value="NAD(P)-bd_dom_sf"/>
</dbReference>
<dbReference type="InterPro" id="IPR020843">
    <property type="entry name" value="PKS_ER"/>
</dbReference>
<dbReference type="PANTHER" id="PTHR42683">
    <property type="entry name" value="ALDEHYDE REDUCTASE"/>
    <property type="match status" value="1"/>
</dbReference>
<dbReference type="Pfam" id="PF08240">
    <property type="entry name" value="ADH_N"/>
    <property type="match status" value="1"/>
</dbReference>
<dbReference type="Pfam" id="PF00107">
    <property type="entry name" value="ADH_zinc_N"/>
    <property type="match status" value="1"/>
</dbReference>
<dbReference type="SMART" id="SM00829">
    <property type="entry name" value="PKS_ER"/>
    <property type="match status" value="1"/>
</dbReference>
<dbReference type="SUPFAM" id="SSF50129">
    <property type="entry name" value="GroES-like"/>
    <property type="match status" value="1"/>
</dbReference>
<dbReference type="SUPFAM" id="SSF51735">
    <property type="entry name" value="NAD(P)-binding Rossmann-fold domains"/>
    <property type="match status" value="1"/>
</dbReference>
<dbReference type="PROSITE" id="PS00059">
    <property type="entry name" value="ADH_ZINC"/>
    <property type="match status" value="1"/>
</dbReference>
<evidence type="ECO:0000250" key="1"/>
<evidence type="ECO:0000305" key="2"/>
<comment type="catalytic activity">
    <reaction>
        <text>a primary alcohol + NADP(+) = an aldehyde + NADPH + H(+)</text>
        <dbReference type="Rhea" id="RHEA:15937"/>
        <dbReference type="ChEBI" id="CHEBI:15378"/>
        <dbReference type="ChEBI" id="CHEBI:15734"/>
        <dbReference type="ChEBI" id="CHEBI:17478"/>
        <dbReference type="ChEBI" id="CHEBI:57783"/>
        <dbReference type="ChEBI" id="CHEBI:58349"/>
        <dbReference type="EC" id="1.1.1.2"/>
    </reaction>
</comment>
<comment type="cofactor">
    <cofactor evidence="1">
        <name>Zn(2+)</name>
        <dbReference type="ChEBI" id="CHEBI:29105"/>
    </cofactor>
    <text evidence="1">Binds 2 Zn(2+) ions per subunit.</text>
</comment>
<comment type="similarity">
    <text evidence="2">Belongs to the zinc-containing alcohol dehydrogenase family.</text>
</comment>
<feature type="chain" id="PRO_0000160744" description="NADP-dependent alcohol dehydrogenase C">
    <location>
        <begin position="1"/>
        <end position="346"/>
    </location>
</feature>
<feature type="binding site" evidence="1">
    <location>
        <position position="41"/>
    </location>
    <ligand>
        <name>Zn(2+)</name>
        <dbReference type="ChEBI" id="CHEBI:29105"/>
        <label>1</label>
        <note>catalytic</note>
    </ligand>
</feature>
<feature type="binding site" evidence="1">
    <location>
        <position position="63"/>
    </location>
    <ligand>
        <name>Zn(2+)</name>
        <dbReference type="ChEBI" id="CHEBI:29105"/>
        <label>1</label>
        <note>catalytic</note>
    </ligand>
</feature>
<feature type="binding site" evidence="1">
    <location>
        <position position="94"/>
    </location>
    <ligand>
        <name>Zn(2+)</name>
        <dbReference type="ChEBI" id="CHEBI:29105"/>
        <label>2</label>
    </ligand>
</feature>
<feature type="binding site" evidence="1">
    <location>
        <position position="97"/>
    </location>
    <ligand>
        <name>Zn(2+)</name>
        <dbReference type="ChEBI" id="CHEBI:29105"/>
        <label>2</label>
    </ligand>
</feature>
<feature type="binding site" evidence="1">
    <location>
        <position position="100"/>
    </location>
    <ligand>
        <name>Zn(2+)</name>
        <dbReference type="ChEBI" id="CHEBI:29105"/>
        <label>2</label>
    </ligand>
</feature>
<feature type="binding site" evidence="1">
    <location>
        <position position="108"/>
    </location>
    <ligand>
        <name>Zn(2+)</name>
        <dbReference type="ChEBI" id="CHEBI:29105"/>
        <label>2</label>
    </ligand>
</feature>
<feature type="binding site" evidence="1">
    <location>
        <position position="158"/>
    </location>
    <ligand>
        <name>Zn(2+)</name>
        <dbReference type="ChEBI" id="CHEBI:29105"/>
        <label>1</label>
        <note>catalytic</note>
    </ligand>
</feature>
<gene>
    <name type="primary">adhC</name>
    <name type="synonym">adh</name>
    <name type="ordered locus">BQ2027_MB3071</name>
</gene>
<proteinExistence type="inferred from homology"/>
<name>ADHC_MYCBO</name>
<reference key="1">
    <citation type="journal article" date="1992" name="Gene">
        <title>Cloning and sequence analysis of the gene encoding an NADP-dependent alcohol dehydrogenase in Mycobacterium bovis BCG.</title>
        <authorList>
            <person name="Stelandre M."/>
            <person name="Bosseloir Y."/>
            <person name="de Bruyn J."/>
            <person name="Maes P."/>
            <person name="Content J."/>
        </authorList>
    </citation>
    <scope>NUCLEOTIDE SEQUENCE [GENOMIC DNA]</scope>
    <source>
        <strain>BCG</strain>
    </source>
</reference>
<reference key="2">
    <citation type="journal article" date="2003" name="Proc. Natl. Acad. Sci. U.S.A.">
        <title>The complete genome sequence of Mycobacterium bovis.</title>
        <authorList>
            <person name="Garnier T."/>
            <person name="Eiglmeier K."/>
            <person name="Camus J.-C."/>
            <person name="Medina N."/>
            <person name="Mansoor H."/>
            <person name="Pryor M."/>
            <person name="Duthoy S."/>
            <person name="Grondin S."/>
            <person name="Lacroix C."/>
            <person name="Monsempe C."/>
            <person name="Simon S."/>
            <person name="Harris B."/>
            <person name="Atkin R."/>
            <person name="Doggett J."/>
            <person name="Mayes R."/>
            <person name="Keating L."/>
            <person name="Wheeler P.R."/>
            <person name="Parkhill J."/>
            <person name="Barrell B.G."/>
            <person name="Cole S.T."/>
            <person name="Gordon S.V."/>
            <person name="Hewinson R.G."/>
        </authorList>
    </citation>
    <scope>NUCLEOTIDE SEQUENCE [LARGE SCALE GENOMIC DNA]</scope>
    <source>
        <strain>ATCC BAA-935 / AF2122/97</strain>
    </source>
</reference>
<reference key="3">
    <citation type="journal article" date="2017" name="Genome Announc.">
        <title>Updated reference genome sequence and annotation of Mycobacterium bovis AF2122/97.</title>
        <authorList>
            <person name="Malone K.M."/>
            <person name="Farrell D."/>
            <person name="Stuber T.P."/>
            <person name="Schubert O.T."/>
            <person name="Aebersold R."/>
            <person name="Robbe-Austerman S."/>
            <person name="Gordon S.V."/>
        </authorList>
    </citation>
    <scope>NUCLEOTIDE SEQUENCE [LARGE SCALE GENOMIC DNA]</scope>
    <scope>GENOME REANNOTATION</scope>
    <source>
        <strain>ATCC BAA-935 / AF2122/97</strain>
    </source>
</reference>